<accession>P75351</accession>
<organism>
    <name type="scientific">Mycoplasma pneumoniae (strain ATCC 29342 / M129 / Subtype 1)</name>
    <name type="common">Mycoplasmoides pneumoniae</name>
    <dbReference type="NCBI Taxonomy" id="272634"/>
    <lineage>
        <taxon>Bacteria</taxon>
        <taxon>Bacillati</taxon>
        <taxon>Mycoplasmatota</taxon>
        <taxon>Mycoplasmoidales</taxon>
        <taxon>Mycoplasmoidaceae</taxon>
        <taxon>Mycoplasmoides</taxon>
    </lineage>
</organism>
<name>HRCA_MYCPN</name>
<feature type="chain" id="PRO_0000182510" description="Heat-inducible transcription repressor HrcA">
    <location>
        <begin position="1"/>
        <end position="351"/>
    </location>
</feature>
<protein>
    <recommendedName>
        <fullName evidence="1">Heat-inducible transcription repressor HrcA</fullName>
    </recommendedName>
</protein>
<comment type="function">
    <text evidence="1">Negative regulator of class I heat shock genes (grpE-dnaK-dnaJ and groELS operons). Prevents heat-shock induction of these operons.</text>
</comment>
<comment type="similarity">
    <text evidence="1">Belongs to the HrcA family.</text>
</comment>
<proteinExistence type="inferred from homology"/>
<sequence>MKNLTTRQAQILKAIINEYIAYPVPVGSKLLTKKYFKNLSGGTLRNEMAVLEKEGYLKKNHISSGRIPSQLGYQYYVKLLTKNDDKSNLKTRLRAIILQKHKTIDEIIELGVKFINEMVNLPVVLTHFSSDEVLKKIDLIMLDQSCALLLLVSASGNVFKKTISYANQRQFEDIMVCVRIFNDRIIDTRFCDIAQHLDVLKEIIRSKVHEYQYVIDEILFKLFNFEEFQQARKQVYGIHYLAQQPEFANQERLTRILNLLEDTSVWQQMAFMNQNNQTTNITFGDKLGLEGEEVSVASTLINTTNESKHQLAIVGPTRMDYQKVKALLLTLKEEIEEYDKQLHGGKTTSST</sequence>
<dbReference type="EMBL" id="U00089">
    <property type="protein sequence ID" value="AAB95678.1"/>
    <property type="molecule type" value="Genomic_DNA"/>
</dbReference>
<dbReference type="PIR" id="S73356">
    <property type="entry name" value="S73356"/>
</dbReference>
<dbReference type="RefSeq" id="NP_109812.1">
    <property type="nucleotide sequence ID" value="NC_000912.1"/>
</dbReference>
<dbReference type="RefSeq" id="WP_010874481.1">
    <property type="nucleotide sequence ID" value="NZ_OU342337.1"/>
</dbReference>
<dbReference type="SMR" id="P75351"/>
<dbReference type="IntAct" id="P75351">
    <property type="interactions" value="1"/>
</dbReference>
<dbReference type="STRING" id="272634.MPN_124"/>
<dbReference type="EnsemblBacteria" id="AAB95678">
    <property type="protein sequence ID" value="AAB95678"/>
    <property type="gene ID" value="MPN_124"/>
</dbReference>
<dbReference type="GeneID" id="66609226"/>
<dbReference type="KEGG" id="mpn:MPN_124"/>
<dbReference type="PATRIC" id="fig|272634.6.peg.131"/>
<dbReference type="HOGENOM" id="CLU_050019_1_0_14"/>
<dbReference type="OrthoDB" id="9783139at2"/>
<dbReference type="BioCyc" id="MPNE272634:G1GJ3-205-MONOMER"/>
<dbReference type="Proteomes" id="UP000000808">
    <property type="component" value="Chromosome"/>
</dbReference>
<dbReference type="GO" id="GO:0003677">
    <property type="term" value="F:DNA binding"/>
    <property type="evidence" value="ECO:0007669"/>
    <property type="project" value="InterPro"/>
</dbReference>
<dbReference type="GO" id="GO:0045892">
    <property type="term" value="P:negative regulation of DNA-templated transcription"/>
    <property type="evidence" value="ECO:0007669"/>
    <property type="project" value="UniProtKB-UniRule"/>
</dbReference>
<dbReference type="Gene3D" id="3.30.450.40">
    <property type="match status" value="1"/>
</dbReference>
<dbReference type="Gene3D" id="1.10.10.10">
    <property type="entry name" value="Winged helix-like DNA-binding domain superfamily/Winged helix DNA-binding domain"/>
    <property type="match status" value="1"/>
</dbReference>
<dbReference type="HAMAP" id="MF_00081">
    <property type="entry name" value="HrcA"/>
    <property type="match status" value="1"/>
</dbReference>
<dbReference type="InterPro" id="IPR029016">
    <property type="entry name" value="GAF-like_dom_sf"/>
</dbReference>
<dbReference type="InterPro" id="IPR002571">
    <property type="entry name" value="HrcA"/>
</dbReference>
<dbReference type="InterPro" id="IPR021153">
    <property type="entry name" value="HrcA_C"/>
</dbReference>
<dbReference type="InterPro" id="IPR036388">
    <property type="entry name" value="WH-like_DNA-bd_sf"/>
</dbReference>
<dbReference type="InterPro" id="IPR036390">
    <property type="entry name" value="WH_DNA-bd_sf"/>
</dbReference>
<dbReference type="NCBIfam" id="TIGR00331">
    <property type="entry name" value="hrcA"/>
    <property type="match status" value="1"/>
</dbReference>
<dbReference type="PANTHER" id="PTHR34824">
    <property type="entry name" value="HEAT-INDUCIBLE TRANSCRIPTION REPRESSOR HRCA"/>
    <property type="match status" value="1"/>
</dbReference>
<dbReference type="PANTHER" id="PTHR34824:SF1">
    <property type="entry name" value="HEAT-INDUCIBLE TRANSCRIPTION REPRESSOR HRCA"/>
    <property type="match status" value="1"/>
</dbReference>
<dbReference type="Pfam" id="PF01628">
    <property type="entry name" value="HrcA"/>
    <property type="match status" value="1"/>
</dbReference>
<dbReference type="PIRSF" id="PIRSF005485">
    <property type="entry name" value="HrcA"/>
    <property type="match status" value="1"/>
</dbReference>
<dbReference type="SUPFAM" id="SSF55781">
    <property type="entry name" value="GAF domain-like"/>
    <property type="match status" value="1"/>
</dbReference>
<dbReference type="SUPFAM" id="SSF46785">
    <property type="entry name" value="Winged helix' DNA-binding domain"/>
    <property type="match status" value="1"/>
</dbReference>
<reference key="1">
    <citation type="journal article" date="1996" name="Nucleic Acids Res.">
        <title>Complete sequence analysis of the genome of the bacterium Mycoplasma pneumoniae.</title>
        <authorList>
            <person name="Himmelreich R."/>
            <person name="Hilbert H."/>
            <person name="Plagens H."/>
            <person name="Pirkl E."/>
            <person name="Li B.-C."/>
            <person name="Herrmann R."/>
        </authorList>
    </citation>
    <scope>NUCLEOTIDE SEQUENCE [LARGE SCALE GENOMIC DNA]</scope>
    <source>
        <strain>ATCC 29342 / M129 / Subtype 1</strain>
    </source>
</reference>
<gene>
    <name evidence="1" type="primary">hrcA</name>
    <name type="ordered locus">MPN_124</name>
    <name type="ORF">MP030</name>
</gene>
<keyword id="KW-1185">Reference proteome</keyword>
<keyword id="KW-0678">Repressor</keyword>
<keyword id="KW-0346">Stress response</keyword>
<keyword id="KW-0804">Transcription</keyword>
<keyword id="KW-0805">Transcription regulation</keyword>
<evidence type="ECO:0000255" key="1">
    <source>
        <dbReference type="HAMAP-Rule" id="MF_00081"/>
    </source>
</evidence>